<name>ISPE_PSET1</name>
<accession>Q3IK98</accession>
<organism>
    <name type="scientific">Pseudoalteromonas translucida (strain TAC 125)</name>
    <dbReference type="NCBI Taxonomy" id="326442"/>
    <lineage>
        <taxon>Bacteria</taxon>
        <taxon>Pseudomonadati</taxon>
        <taxon>Pseudomonadota</taxon>
        <taxon>Gammaproteobacteria</taxon>
        <taxon>Alteromonadales</taxon>
        <taxon>Pseudoalteromonadaceae</taxon>
        <taxon>Pseudoalteromonas</taxon>
    </lineage>
</organism>
<comment type="function">
    <text evidence="1">Catalyzes the phosphorylation of the position 2 hydroxy group of 4-diphosphocytidyl-2C-methyl-D-erythritol.</text>
</comment>
<comment type="catalytic activity">
    <reaction evidence="1">
        <text>4-CDP-2-C-methyl-D-erythritol + ATP = 4-CDP-2-C-methyl-D-erythritol 2-phosphate + ADP + H(+)</text>
        <dbReference type="Rhea" id="RHEA:18437"/>
        <dbReference type="ChEBI" id="CHEBI:15378"/>
        <dbReference type="ChEBI" id="CHEBI:30616"/>
        <dbReference type="ChEBI" id="CHEBI:57823"/>
        <dbReference type="ChEBI" id="CHEBI:57919"/>
        <dbReference type="ChEBI" id="CHEBI:456216"/>
        <dbReference type="EC" id="2.7.1.148"/>
    </reaction>
</comment>
<comment type="pathway">
    <text evidence="1">Isoprenoid biosynthesis; isopentenyl diphosphate biosynthesis via DXP pathway; isopentenyl diphosphate from 1-deoxy-D-xylulose 5-phosphate: step 3/6.</text>
</comment>
<comment type="similarity">
    <text evidence="1">Belongs to the GHMP kinase family. IspE subfamily.</text>
</comment>
<feature type="chain" id="PRO_0000235117" description="4-diphosphocytidyl-2-C-methyl-D-erythritol kinase">
    <location>
        <begin position="1"/>
        <end position="284"/>
    </location>
</feature>
<feature type="active site" evidence="1">
    <location>
        <position position="14"/>
    </location>
</feature>
<feature type="active site" evidence="1">
    <location>
        <position position="139"/>
    </location>
</feature>
<feature type="binding site" evidence="1">
    <location>
        <begin position="97"/>
        <end position="107"/>
    </location>
    <ligand>
        <name>ATP</name>
        <dbReference type="ChEBI" id="CHEBI:30616"/>
    </ligand>
</feature>
<evidence type="ECO:0000255" key="1">
    <source>
        <dbReference type="HAMAP-Rule" id="MF_00061"/>
    </source>
</evidence>
<proteinExistence type="inferred from homology"/>
<sequence>MNNITSFSLIAPAKLNLFLHINGRRDDGYHELETLFTFLNYGDELSFELSDLPAIIVTGDTNGIATTDNLIYKAALLLQTQCKIKQGVKINLIKRLPMGGGVGGGSSDAASTLLALNKLWKTALSLDELAHLGLQLGADVPVFIHGKSAIAHGIGEQLEQVMLEQKWYCVVFPNQHVSTAKIFTHPELKRDTPKISGDWQQHILTNDCESLVKKLCPEVEKTLQWLLKYAPSKMTGTGSCCFVEFATQVQAQDVLANLPHTWQGFIASSVNTSPAHTELAAIFD</sequence>
<dbReference type="EC" id="2.7.1.148" evidence="1"/>
<dbReference type="EMBL" id="CR954246">
    <property type="protein sequence ID" value="CAI86130.1"/>
    <property type="molecule type" value="Genomic_DNA"/>
</dbReference>
<dbReference type="SMR" id="Q3IK98"/>
<dbReference type="STRING" id="326442.PSHAa1055"/>
<dbReference type="KEGG" id="pha:PSHAa1055"/>
<dbReference type="PATRIC" id="fig|326442.8.peg.1012"/>
<dbReference type="eggNOG" id="COG1947">
    <property type="taxonomic scope" value="Bacteria"/>
</dbReference>
<dbReference type="HOGENOM" id="CLU_053057_3_0_6"/>
<dbReference type="BioCyc" id="PHAL326442:PSHA_RS05195-MONOMER"/>
<dbReference type="UniPathway" id="UPA00056">
    <property type="reaction ID" value="UER00094"/>
</dbReference>
<dbReference type="Proteomes" id="UP000006843">
    <property type="component" value="Chromosome I"/>
</dbReference>
<dbReference type="GO" id="GO:0050515">
    <property type="term" value="F:4-(cytidine 5'-diphospho)-2-C-methyl-D-erythritol kinase activity"/>
    <property type="evidence" value="ECO:0007669"/>
    <property type="project" value="UniProtKB-UniRule"/>
</dbReference>
<dbReference type="GO" id="GO:0005524">
    <property type="term" value="F:ATP binding"/>
    <property type="evidence" value="ECO:0007669"/>
    <property type="project" value="UniProtKB-UniRule"/>
</dbReference>
<dbReference type="GO" id="GO:0019288">
    <property type="term" value="P:isopentenyl diphosphate biosynthetic process, methylerythritol 4-phosphate pathway"/>
    <property type="evidence" value="ECO:0007669"/>
    <property type="project" value="UniProtKB-UniRule"/>
</dbReference>
<dbReference type="GO" id="GO:0016114">
    <property type="term" value="P:terpenoid biosynthetic process"/>
    <property type="evidence" value="ECO:0007669"/>
    <property type="project" value="InterPro"/>
</dbReference>
<dbReference type="Gene3D" id="3.30.230.10">
    <property type="match status" value="1"/>
</dbReference>
<dbReference type="Gene3D" id="3.30.70.890">
    <property type="entry name" value="GHMP kinase, C-terminal domain"/>
    <property type="match status" value="1"/>
</dbReference>
<dbReference type="HAMAP" id="MF_00061">
    <property type="entry name" value="IspE"/>
    <property type="match status" value="1"/>
</dbReference>
<dbReference type="InterPro" id="IPR013750">
    <property type="entry name" value="GHMP_kinase_C_dom"/>
</dbReference>
<dbReference type="InterPro" id="IPR036554">
    <property type="entry name" value="GHMP_kinase_C_sf"/>
</dbReference>
<dbReference type="InterPro" id="IPR006204">
    <property type="entry name" value="GHMP_kinase_N_dom"/>
</dbReference>
<dbReference type="InterPro" id="IPR004424">
    <property type="entry name" value="IspE"/>
</dbReference>
<dbReference type="InterPro" id="IPR020568">
    <property type="entry name" value="Ribosomal_Su5_D2-typ_SF"/>
</dbReference>
<dbReference type="InterPro" id="IPR014721">
    <property type="entry name" value="Ribsml_uS5_D2-typ_fold_subgr"/>
</dbReference>
<dbReference type="NCBIfam" id="TIGR00154">
    <property type="entry name" value="ispE"/>
    <property type="match status" value="1"/>
</dbReference>
<dbReference type="PANTHER" id="PTHR43527">
    <property type="entry name" value="4-DIPHOSPHOCYTIDYL-2-C-METHYL-D-ERYTHRITOL KINASE, CHLOROPLASTIC"/>
    <property type="match status" value="1"/>
</dbReference>
<dbReference type="PANTHER" id="PTHR43527:SF2">
    <property type="entry name" value="4-DIPHOSPHOCYTIDYL-2-C-METHYL-D-ERYTHRITOL KINASE, CHLOROPLASTIC"/>
    <property type="match status" value="1"/>
</dbReference>
<dbReference type="Pfam" id="PF08544">
    <property type="entry name" value="GHMP_kinases_C"/>
    <property type="match status" value="1"/>
</dbReference>
<dbReference type="Pfam" id="PF00288">
    <property type="entry name" value="GHMP_kinases_N"/>
    <property type="match status" value="1"/>
</dbReference>
<dbReference type="PIRSF" id="PIRSF010376">
    <property type="entry name" value="IspE"/>
    <property type="match status" value="1"/>
</dbReference>
<dbReference type="SUPFAM" id="SSF55060">
    <property type="entry name" value="GHMP Kinase, C-terminal domain"/>
    <property type="match status" value="1"/>
</dbReference>
<dbReference type="SUPFAM" id="SSF54211">
    <property type="entry name" value="Ribosomal protein S5 domain 2-like"/>
    <property type="match status" value="1"/>
</dbReference>
<reference key="1">
    <citation type="journal article" date="2005" name="Genome Res.">
        <title>Coping with cold: the genome of the versatile marine Antarctica bacterium Pseudoalteromonas haloplanktis TAC125.</title>
        <authorList>
            <person name="Medigue C."/>
            <person name="Krin E."/>
            <person name="Pascal G."/>
            <person name="Barbe V."/>
            <person name="Bernsel A."/>
            <person name="Bertin P.N."/>
            <person name="Cheung F."/>
            <person name="Cruveiller S."/>
            <person name="D'Amico S."/>
            <person name="Duilio A."/>
            <person name="Fang G."/>
            <person name="Feller G."/>
            <person name="Ho C."/>
            <person name="Mangenot S."/>
            <person name="Marino G."/>
            <person name="Nilsson J."/>
            <person name="Parrilli E."/>
            <person name="Rocha E.P.C."/>
            <person name="Rouy Z."/>
            <person name="Sekowska A."/>
            <person name="Tutino M.L."/>
            <person name="Vallenet D."/>
            <person name="von Heijne G."/>
            <person name="Danchin A."/>
        </authorList>
    </citation>
    <scope>NUCLEOTIDE SEQUENCE [LARGE SCALE GENOMIC DNA]</scope>
    <source>
        <strain>TAC 125</strain>
    </source>
</reference>
<gene>
    <name evidence="1" type="primary">ispE</name>
    <name type="ordered locus">PSHAa1055</name>
</gene>
<keyword id="KW-0067">ATP-binding</keyword>
<keyword id="KW-0414">Isoprene biosynthesis</keyword>
<keyword id="KW-0418">Kinase</keyword>
<keyword id="KW-0547">Nucleotide-binding</keyword>
<keyword id="KW-1185">Reference proteome</keyword>
<keyword id="KW-0808">Transferase</keyword>
<protein>
    <recommendedName>
        <fullName evidence="1">4-diphosphocytidyl-2-C-methyl-D-erythritol kinase</fullName>
        <shortName evidence="1">CMK</shortName>
        <ecNumber evidence="1">2.7.1.148</ecNumber>
    </recommendedName>
    <alternativeName>
        <fullName evidence="1">4-(cytidine-5'-diphospho)-2-C-methyl-D-erythritol kinase</fullName>
    </alternativeName>
</protein>